<accession>P41428</accession>
<dbReference type="EMBL" id="L22858">
    <property type="protein sequence ID" value="AAA66653.1"/>
    <property type="molecule type" value="Genomic_DNA"/>
</dbReference>
<dbReference type="EMBL" id="M96361">
    <property type="protein sequence ID" value="AAA66793.1"/>
    <property type="molecule type" value="Genomic_DNA"/>
</dbReference>
<dbReference type="PIR" id="G72852">
    <property type="entry name" value="G72852"/>
</dbReference>
<dbReference type="RefSeq" id="NP_054052.1">
    <property type="nucleotide sequence ID" value="NC_001623.1"/>
</dbReference>
<dbReference type="GeneID" id="1403855"/>
<dbReference type="KEGG" id="vg:1403855"/>
<dbReference type="OrthoDB" id="2143at10239"/>
<dbReference type="Proteomes" id="UP000008292">
    <property type="component" value="Segment"/>
</dbReference>
<dbReference type="GO" id="GO:0044423">
    <property type="term" value="C:virion component"/>
    <property type="evidence" value="ECO:0007669"/>
    <property type="project" value="UniProtKB-KW"/>
</dbReference>
<dbReference type="InterPro" id="IPR022048">
    <property type="entry name" value="Envelope_fusion-like"/>
</dbReference>
<dbReference type="Pfam" id="PF12259">
    <property type="entry name" value="Baculo_F"/>
    <property type="match status" value="1"/>
</dbReference>
<comment type="function">
    <text evidence="2 3">Pathogenicity factor that accelerates mortality in the host insect.</text>
</comment>
<comment type="subcellular location">
    <subcellularLocation>
        <location evidence="2">Virion</location>
    </subcellularLocation>
</comment>
<feature type="signal peptide" evidence="1">
    <location>
        <begin position="1"/>
        <end position="37"/>
    </location>
</feature>
<feature type="chain" id="PRO_0000036749" description="Protein AC23">
    <location>
        <begin position="38"/>
        <end position="690"/>
    </location>
</feature>
<evidence type="ECO:0000255" key="1"/>
<evidence type="ECO:0000269" key="2">
    <source>
    </source>
</evidence>
<evidence type="ECO:0000269" key="3">
    <source>
    </source>
</evidence>
<sequence length="690" mass="79857">MLACKFSQYQAFIMDGVKLLGTCALIILLSTTSTVVGRDRITFTPIEDSAGLMFERMYGLRHHTDDRFVFVKKFNFVSVLQELNNIKSKIELYEAQVSTCTNVRQIKQNRSSIIKARIENQLQFLTQLNKNLITYSVESSILSNDVLDNIDLEYDDSGEFDVYDEYEQPSHWSNMTVSDAQALLRNPPKDRVMFLDTVTTSDVSSKYEEYINCIVSNRTVENECMFLANMMNVLNDKLDDAAALAKMLERIVKQTRKNKLNISNTVIDDDTLLTEMKKLTQTLYNQNRVWVVDFNKDMNSYFDLSQAYKLHLYVDLNTVIMFITMPLLKSTAVSFNLYRVMTVPFCRGKMCLLIISGNEYFGITDSKNYYVPVSDNFRQDCQEFTGYNEFLCPETEPIATMNSKVCEIEMFMGRYSDDVDNMCDIRVANYNPKKAYVNTLIDYRKWLYIFPNTTVSVHYYCHDALVEVDTKVSPGVGVMFSTMAQTCSIRITYDVTITVDSRFYVSHSTTYWPKKKFNFNNYIDQMLLEKATTSFIPTVDNFTRPVLLQLPHKFHIKDYTSTPHHFFHQSKIYTNSAAPDEDSQDDSNTTVVIIAIVAAMILFCGLLLFLFCCIKKRCHQSNNVVVQYKNNNEFVTICNNLEDNRAYINLPNEYDSDDMPKPLYPLLGFNDDLLKDDKPVLYPMIIERIK</sequence>
<name>AC23_NPVAC</name>
<organism>
    <name type="scientific">Autographa californica nuclear polyhedrosis virus</name>
    <name type="common">AcMNPV</name>
    <dbReference type="NCBI Taxonomy" id="46015"/>
    <lineage>
        <taxon>Viruses</taxon>
        <taxon>Viruses incertae sedis</taxon>
        <taxon>Naldaviricetes</taxon>
        <taxon>Lefavirales</taxon>
        <taxon>Baculoviridae</taxon>
        <taxon>Alphabaculovirus</taxon>
        <taxon>Alphabaculovirus aucalifornicae</taxon>
    </lineage>
</organism>
<proteinExistence type="inferred from homology"/>
<reference key="1">
    <citation type="journal article" date="1994" name="Virology">
        <title>The complete DNA sequence of Autographa californica nuclear polyhedrosis virus.</title>
        <authorList>
            <person name="Ayres M.D."/>
            <person name="Howard S.C."/>
            <person name="Kuzio J."/>
            <person name="Lopez-Ferber M."/>
            <person name="Possee R.D."/>
        </authorList>
    </citation>
    <scope>NUCLEOTIDE SEQUENCE [LARGE SCALE GENOMIC DNA]</scope>
    <source>
        <strain>C6</strain>
    </source>
</reference>
<reference key="2">
    <citation type="journal article" date="1992" name="Virology">
        <title>Sequence, genomic organization of the EcoRI-A fragment of Autographa californica nuclear polyhedrosis virus, and identification of a viral-encoded protein resembling the outer capsid protein VP8 of rotavirus.</title>
        <authorList>
            <person name="Braunagel S.C."/>
            <person name="Daniel K.D."/>
            <person name="Reilly L.M."/>
            <person name="Guarino L.A."/>
            <person name="Hong T."/>
            <person name="Summers M.D."/>
        </authorList>
    </citation>
    <scope>NUCLEOTIDE SEQUENCE [GENOMIC DNA]</scope>
    <source>
        <strain>E2</strain>
    </source>
</reference>
<reference key="3">
    <citation type="journal article" date="2003" name="J. Virol.">
        <title>Ac23, an envelope fusion protein homolog in the baculovirus Autographa californica multicapsid nucleopolyhedrovirus, is a viral pathogenicity factor.</title>
        <authorList>
            <person name="Lung O.Y."/>
            <person name="Cruz-Alvarez M."/>
            <person name="Blissard G.W."/>
        </authorList>
    </citation>
    <scope>SUBCELLULAR LOCATION</scope>
    <scope>FUNCTION</scope>
</reference>
<reference key="4">
    <citation type="journal article" date="2008" name="J. Virol.">
        <title>The F-like protein Ac23 enhances the infectivity of the budded virus of gp64-null Autographa californica multinucleocapsid nucleopolyhedrovirus pseudotyped with baculovirus envelope fusion protein F.</title>
        <authorList>
            <person name="Wang M."/>
            <person name="Tan Y."/>
            <person name="Yin F."/>
            <person name="Deng F."/>
            <person name="Vlak J.M."/>
            <person name="Hu Z."/>
            <person name="Wang H."/>
        </authorList>
    </citation>
    <scope>FUNCTION</scope>
</reference>
<keyword id="KW-1185">Reference proteome</keyword>
<keyword id="KW-0732">Signal</keyword>
<keyword id="KW-0946">Virion</keyword>
<organismHost>
    <name type="scientific">Lepidoptera</name>
    <name type="common">butterflies and moths</name>
    <dbReference type="NCBI Taxonomy" id="7088"/>
</organismHost>
<protein>
    <recommendedName>
        <fullName>Protein AC23</fullName>
    </recommendedName>
    <alternativeName>
        <fullName>ORF 9</fullName>
    </alternativeName>
</protein>